<organism>
    <name type="scientific">Mus musculus</name>
    <name type="common">Mouse</name>
    <dbReference type="NCBI Taxonomy" id="10090"/>
    <lineage>
        <taxon>Eukaryota</taxon>
        <taxon>Metazoa</taxon>
        <taxon>Chordata</taxon>
        <taxon>Craniata</taxon>
        <taxon>Vertebrata</taxon>
        <taxon>Euteleostomi</taxon>
        <taxon>Mammalia</taxon>
        <taxon>Eutheria</taxon>
        <taxon>Euarchontoglires</taxon>
        <taxon>Glires</taxon>
        <taxon>Rodentia</taxon>
        <taxon>Myomorpha</taxon>
        <taxon>Muroidea</taxon>
        <taxon>Muridae</taxon>
        <taxon>Murinae</taxon>
        <taxon>Mus</taxon>
        <taxon>Mus</taxon>
    </lineage>
</organism>
<name>DPTOR_MOUSE</name>
<keyword id="KW-0007">Acetylation</keyword>
<keyword id="KW-0025">Alternative splicing</keyword>
<keyword id="KW-0446">Lipid-binding</keyword>
<keyword id="KW-0458">Lysosome</keyword>
<keyword id="KW-0472">Membrane</keyword>
<keyword id="KW-0597">Phosphoprotein</keyword>
<keyword id="KW-1185">Reference proteome</keyword>
<keyword id="KW-0677">Repeat</keyword>
<keyword id="KW-0832">Ubl conjugation</keyword>
<feature type="chain" id="PRO_0000284785" description="DEP domain-containing mTOR-interacting protein">
    <location>
        <begin position="1"/>
        <end position="409"/>
    </location>
</feature>
<feature type="domain" description="DEP 1" evidence="2">
    <location>
        <begin position="36"/>
        <end position="119"/>
    </location>
</feature>
<feature type="domain" description="DEP 2" evidence="2">
    <location>
        <begin position="146"/>
        <end position="219"/>
    </location>
</feature>
<feature type="domain" description="PDZ" evidence="3">
    <location>
        <begin position="330"/>
        <end position="407"/>
    </location>
</feature>
<feature type="region of interest" description="Disordered" evidence="4">
    <location>
        <begin position="1"/>
        <end position="23"/>
    </location>
</feature>
<feature type="short sequence motif" description="DDEX motif" evidence="1">
    <location>
        <begin position="217"/>
        <end position="235"/>
    </location>
</feature>
<feature type="short sequence motif" description="BetaTrCP degron motif" evidence="1">
    <location>
        <begin position="286"/>
        <end position="291"/>
    </location>
</feature>
<feature type="compositionally biased region" description="Gly residues" evidence="4">
    <location>
        <begin position="1"/>
        <end position="10"/>
    </location>
</feature>
<feature type="modified residue" description="N-acetylmethionine" evidence="1">
    <location>
        <position position="1"/>
    </location>
</feature>
<feature type="modified residue" description="Phosphoserine" evidence="1">
    <location>
        <position position="235"/>
    </location>
</feature>
<feature type="modified residue" description="Phosphothreonine" evidence="1">
    <location>
        <position position="241"/>
    </location>
</feature>
<feature type="modified residue" description="Phosphoserine" evidence="11">
    <location>
        <position position="244"/>
    </location>
</feature>
<feature type="modified residue" description="Phosphoserine" evidence="1">
    <location>
        <position position="258"/>
    </location>
</feature>
<feature type="modified residue" description="Phosphothreonine" evidence="1">
    <location>
        <position position="259"/>
    </location>
</feature>
<feature type="modified residue" description="Phosphoserine" evidence="1">
    <location>
        <position position="263"/>
    </location>
</feature>
<feature type="modified residue" description="Phosphoserine" evidence="11">
    <location>
        <position position="265"/>
    </location>
</feature>
<feature type="modified residue" description="Phosphoserine" evidence="11">
    <location>
        <position position="280"/>
    </location>
</feature>
<feature type="modified residue" description="Phosphoserine" evidence="1">
    <location>
        <position position="282"/>
    </location>
</feature>
<feature type="modified residue" description="Phosphoserine" evidence="1">
    <location>
        <position position="283"/>
    </location>
</feature>
<feature type="modified residue" description="Phosphoserine" evidence="1">
    <location>
        <position position="286"/>
    </location>
</feature>
<feature type="modified residue" description="Phosphoserine" evidence="1">
    <location>
        <position position="287"/>
    </location>
</feature>
<feature type="modified residue" description="Phosphotyrosine" evidence="1">
    <location>
        <position position="289"/>
    </location>
</feature>
<feature type="modified residue" description="Phosphoserine" evidence="1">
    <location>
        <position position="291"/>
    </location>
</feature>
<feature type="modified residue" description="Phosphoserine" evidence="11">
    <location>
        <position position="293"/>
    </location>
</feature>
<feature type="modified residue" description="Phosphothreonine" evidence="1">
    <location>
        <position position="295"/>
    </location>
</feature>
<feature type="modified residue" description="Phosphoserine" evidence="1">
    <location>
        <position position="297"/>
    </location>
</feature>
<feature type="modified residue" description="Phosphoserine" evidence="1">
    <location>
        <position position="298"/>
    </location>
</feature>
<feature type="modified residue" description="Phosphoserine" evidence="1">
    <location>
        <position position="299"/>
    </location>
</feature>
<feature type="splice variant" id="VSP_024648" description="In isoform 2." evidence="6">
    <original>MEEGSSGGSGSSDSNAGGSGGVQQRELERMAEVLVTGEQL</original>
    <variation>MKQAFLVVLRHSISEDRLPPLSVITSGC</variation>
    <location>
        <begin position="1"/>
        <end position="40"/>
    </location>
</feature>
<feature type="splice variant" id="VSP_024649" description="In isoform 3." evidence="6">
    <original>VCQFVVSVNGLNVLNVDYRTVSNLILTGPRTIVMEVMEELDC</original>
    <variation>DTGTESRKIVTSRLAWATWQDLMGGKVGGDAIPI</variation>
    <location>
        <begin position="368"/>
        <end position="409"/>
    </location>
</feature>
<feature type="sequence conflict" description="In Ref. 2; BAE26298." evidence="9" ref="2">
    <original>S</original>
    <variation>G</variation>
    <location>
        <position position="11"/>
    </location>
</feature>
<feature type="sequence conflict" description="In Ref. 2; BAE26298." evidence="9" ref="2">
    <original>A</original>
    <variation>P</variation>
    <location>
        <position position="125"/>
    </location>
</feature>
<feature type="sequence conflict" description="In Ref. 2; BAE26298." evidence="9" ref="2">
    <original>S</original>
    <variation>N</variation>
    <location>
        <position position="128"/>
    </location>
</feature>
<feature type="sequence conflict" description="In Ref. 2; BAE26298." evidence="9" ref="2">
    <original>T</original>
    <variation>I</variation>
    <location>
        <position position="149"/>
    </location>
</feature>
<evidence type="ECO:0000250" key="1">
    <source>
        <dbReference type="UniProtKB" id="Q8TB45"/>
    </source>
</evidence>
<evidence type="ECO:0000255" key="2">
    <source>
        <dbReference type="PROSITE-ProRule" id="PRU00066"/>
    </source>
</evidence>
<evidence type="ECO:0000255" key="3">
    <source>
        <dbReference type="PROSITE-ProRule" id="PRU00143"/>
    </source>
</evidence>
<evidence type="ECO:0000256" key="4">
    <source>
        <dbReference type="SAM" id="MobiDB-lite"/>
    </source>
</evidence>
<evidence type="ECO:0000269" key="5">
    <source>
    </source>
</evidence>
<evidence type="ECO:0000303" key="6">
    <source>
    </source>
</evidence>
<evidence type="ECO:0000303" key="7">
    <source>
    </source>
</evidence>
<evidence type="ECO:0000303" key="8">
    <source ref="1"/>
</evidence>
<evidence type="ECO:0000305" key="9"/>
<evidence type="ECO:0000312" key="10">
    <source>
        <dbReference type="MGI" id="MGI:2146322"/>
    </source>
</evidence>
<evidence type="ECO:0007744" key="11">
    <source>
    </source>
</evidence>
<gene>
    <name evidence="7 10" type="primary">Deptor</name>
    <name type="synonym">Depdc6</name>
    <name evidence="8" type="synonym">Kiaa4200</name>
</gene>
<proteinExistence type="evidence at protein level"/>
<comment type="function">
    <text evidence="1">Negative regulator of the mTORC1 and mTORC2 complexes: inhibits the protein kinase activity of MTOR, thereby inactivating both complexes. DEPTOR inhibits mTORC1 and mTORC2 to induce autophagy. In contrast to AKT1S1/PRAS40, only partially inhibits mTORC1 activity.</text>
</comment>
<comment type="activity regulation">
    <text evidence="1">Inhibited upon phosphatidic acid-binding: phosphatidic acid produced upon mitogenic stimulation promotes DEPTOR dissociatiom from the mTORC1 and mTORC2 complexes, leading to their activation. Specifically binds unsaturated phosphatidic acid, such as 16:0-18:1, 18:0-18:1 and di-18:1. Inhibited when nutrients are present via a feedback loop: phosphorylation by MTOR promotes DEPTOR ubiquitination and degradation.</text>
</comment>
<comment type="subunit">
    <text evidence="1">Associated component of the mechanistic target of rapamycin complex 1 (mTORC1) which contains MTOR, MLST8 and RPTOR. Associated component of the mechanistic target of rapamycin complex 2 (mTORC2) which contains MTOR, MLST8, PROTOR1, RICTOR, MAPKAP1 and DEPTOR. Interacts (via PDZ domain) with MTOR; interacts with MTOR within both mTORC1 and mTORC2. Interacts (via PDZ domain) with MINAR1 (via N-terminus). Interacts with SIK3.</text>
</comment>
<comment type="subcellular location">
    <subcellularLocation>
        <location evidence="1">Lysosome membrane</location>
    </subcellularLocation>
    <text evidence="1">Localizes to the lysosomal membrane when associated with the mTORC1 and mTORC2 complexes.</text>
</comment>
<comment type="alternative products">
    <event type="alternative splicing"/>
    <isoform>
        <id>Q570Y9-1</id>
        <name>1</name>
        <sequence type="displayed"/>
    </isoform>
    <isoform>
        <id>Q570Y9-2</id>
        <name>2</name>
        <sequence type="described" ref="VSP_024648"/>
    </isoform>
    <isoform>
        <id>Q570Y9-3</id>
        <name>3</name>
        <sequence type="described" ref="VSP_024649"/>
    </isoform>
</comment>
<comment type="developmental stage">
    <text evidence="5">At postnatal day 1 (P1), in cartilage growth plate, primarily expressed in resting and proliferating chondrocytes. This expression pattern is maintained at least until P21 (at protein level).</text>
</comment>
<comment type="PTM">
    <text evidence="1">Phosphorylation weakens interaction with MTOR within mTORC1 and mTORC2 (By similarity). Phosphorylated at Ser-286, Ser-287 and Ser-291 in response to mitogenic stimulation by MTOR: DEPTOR is either directly phosphorylated by MTOR or indirectly via proteins kinases that are activated by MTOR, such as CK1/CSNK1A1 (By similarity). Phosphorylation at Ser-286, Ser-287 and Ser-291 promotes ubiquitination by the SCF(BTRC) complex, followed by degradation (By similarity). Phosphorylation at Ser-235 by MAPK3/ERK1 promotes deubiquitination by USP7, enhancing its stability (By similarity). Phosphorylation at Tyr-291 by SYK impairs its interaction with MTOR, promoting mTORC1 and mTORC2 signaling (By similarity).</text>
</comment>
<comment type="PTM">
    <text evidence="1">Ubiquitinated; leading to proteasomal degradation (By similarity). Ubiquitination by the SCF(BTRC) and SCF(FBXW11) complexes following phosphorylation at Ser-286, Ser-287 and Ser-291 by MTOR, leads to its degradation by the proteasome (By similarity). Deubiquitinated by OTUB1 in response to amino acid via a non-canonical mechanism, leading to DEPTOR stability (By similarity). Deubiquitinated by USP7 following phosphorylation at Ser-235, promoting its stability (By similarity).</text>
</comment>
<comment type="sequence caution" evidence="9">
    <conflict type="erroneous initiation">
        <sequence resource="EMBL-CDS" id="BAD90225"/>
    </conflict>
    <text>Extended N-terminus.</text>
</comment>
<accession>Q570Y9</accession>
<accession>Q3UM00</accession>
<accession>Q3UT08</accession>
<sequence>MEEGSSGGSGSSDSNAGGSGGVQQRELERMAEVLVTGEQLRLRLHEEKVIKDRRHHLKTYPNCFVAKELIDWLIEHKEASDRETAIKLMQKLADRGIIHHVCDEHKEFKDVKLFYRFRKDDGTFALDSEVKAFMRGQRLYEKLMSPETTLLQPREEEGVKYERTFMASEFLDWLVQEGEATTRKEAEQLCHRLMDHGIIQHVSNKHPFVDSNLLYQFRMNFRRRRRLMELLNETSPSSQETHDSPFCLRKQSHDSRKSTSFMSVSPSKEIKIVSAVRRSSMSSCGSSGYFSSSPTLSSSPPVLCNPKSVLKRPVTSEELLTPGAPYARKTFTIVGDAVGWGFVVRGSKPCHIQAVDPSGPAAAAGMKVCQFVVSVNGLNVLNVDYRTVSNLILTGPRTIVMEVMEELDC</sequence>
<reference key="1">
    <citation type="submission" date="2005-02" db="EMBL/GenBank/DDBJ databases">
        <title>Prediction of the coding sequences of mouse homologues of KIAA gene. The complete nucleotide sequences of mouse KIAA-homologous cDNAs identified by screening of terminal sequences of cDNA clones randomly sampled from size-fractionated libraries.</title>
        <authorList>
            <person name="Okazaki N."/>
            <person name="Kikuno R.F."/>
            <person name="Ohara R."/>
            <person name="Inamoto S."/>
            <person name="Seino S."/>
            <person name="Nishimura M."/>
            <person name="Nagase T."/>
            <person name="Ohara O."/>
            <person name="Koga H."/>
        </authorList>
    </citation>
    <scope>NUCLEOTIDE SEQUENCE [LARGE SCALE MRNA] (ISOFORM 1)</scope>
    <source>
        <tissue>Pancreatic islet</tissue>
    </source>
</reference>
<reference key="2">
    <citation type="journal article" date="2005" name="Science">
        <title>The transcriptional landscape of the mammalian genome.</title>
        <authorList>
            <person name="Carninci P."/>
            <person name="Kasukawa T."/>
            <person name="Katayama S."/>
            <person name="Gough J."/>
            <person name="Frith M.C."/>
            <person name="Maeda N."/>
            <person name="Oyama R."/>
            <person name="Ravasi T."/>
            <person name="Lenhard B."/>
            <person name="Wells C."/>
            <person name="Kodzius R."/>
            <person name="Shimokawa K."/>
            <person name="Bajic V.B."/>
            <person name="Brenner S.E."/>
            <person name="Batalov S."/>
            <person name="Forrest A.R."/>
            <person name="Zavolan M."/>
            <person name="Davis M.J."/>
            <person name="Wilming L.G."/>
            <person name="Aidinis V."/>
            <person name="Allen J.E."/>
            <person name="Ambesi-Impiombato A."/>
            <person name="Apweiler R."/>
            <person name="Aturaliya R.N."/>
            <person name="Bailey T.L."/>
            <person name="Bansal M."/>
            <person name="Baxter L."/>
            <person name="Beisel K.W."/>
            <person name="Bersano T."/>
            <person name="Bono H."/>
            <person name="Chalk A.M."/>
            <person name="Chiu K.P."/>
            <person name="Choudhary V."/>
            <person name="Christoffels A."/>
            <person name="Clutterbuck D.R."/>
            <person name="Crowe M.L."/>
            <person name="Dalla E."/>
            <person name="Dalrymple B.P."/>
            <person name="de Bono B."/>
            <person name="Della Gatta G."/>
            <person name="di Bernardo D."/>
            <person name="Down T."/>
            <person name="Engstrom P."/>
            <person name="Fagiolini M."/>
            <person name="Faulkner G."/>
            <person name="Fletcher C.F."/>
            <person name="Fukushima T."/>
            <person name="Furuno M."/>
            <person name="Futaki S."/>
            <person name="Gariboldi M."/>
            <person name="Georgii-Hemming P."/>
            <person name="Gingeras T.R."/>
            <person name="Gojobori T."/>
            <person name="Green R.E."/>
            <person name="Gustincich S."/>
            <person name="Harbers M."/>
            <person name="Hayashi Y."/>
            <person name="Hensch T.K."/>
            <person name="Hirokawa N."/>
            <person name="Hill D."/>
            <person name="Huminiecki L."/>
            <person name="Iacono M."/>
            <person name="Ikeo K."/>
            <person name="Iwama A."/>
            <person name="Ishikawa T."/>
            <person name="Jakt M."/>
            <person name="Kanapin A."/>
            <person name="Katoh M."/>
            <person name="Kawasawa Y."/>
            <person name="Kelso J."/>
            <person name="Kitamura H."/>
            <person name="Kitano H."/>
            <person name="Kollias G."/>
            <person name="Krishnan S.P."/>
            <person name="Kruger A."/>
            <person name="Kummerfeld S.K."/>
            <person name="Kurochkin I.V."/>
            <person name="Lareau L.F."/>
            <person name="Lazarevic D."/>
            <person name="Lipovich L."/>
            <person name="Liu J."/>
            <person name="Liuni S."/>
            <person name="McWilliam S."/>
            <person name="Madan Babu M."/>
            <person name="Madera M."/>
            <person name="Marchionni L."/>
            <person name="Matsuda H."/>
            <person name="Matsuzawa S."/>
            <person name="Miki H."/>
            <person name="Mignone F."/>
            <person name="Miyake S."/>
            <person name="Morris K."/>
            <person name="Mottagui-Tabar S."/>
            <person name="Mulder N."/>
            <person name="Nakano N."/>
            <person name="Nakauchi H."/>
            <person name="Ng P."/>
            <person name="Nilsson R."/>
            <person name="Nishiguchi S."/>
            <person name="Nishikawa S."/>
            <person name="Nori F."/>
            <person name="Ohara O."/>
            <person name="Okazaki Y."/>
            <person name="Orlando V."/>
            <person name="Pang K.C."/>
            <person name="Pavan W.J."/>
            <person name="Pavesi G."/>
            <person name="Pesole G."/>
            <person name="Petrovsky N."/>
            <person name="Piazza S."/>
            <person name="Reed J."/>
            <person name="Reid J.F."/>
            <person name="Ring B.Z."/>
            <person name="Ringwald M."/>
            <person name="Rost B."/>
            <person name="Ruan Y."/>
            <person name="Salzberg S.L."/>
            <person name="Sandelin A."/>
            <person name="Schneider C."/>
            <person name="Schoenbach C."/>
            <person name="Sekiguchi K."/>
            <person name="Semple C.A."/>
            <person name="Seno S."/>
            <person name="Sessa L."/>
            <person name="Sheng Y."/>
            <person name="Shibata Y."/>
            <person name="Shimada H."/>
            <person name="Shimada K."/>
            <person name="Silva D."/>
            <person name="Sinclair B."/>
            <person name="Sperling S."/>
            <person name="Stupka E."/>
            <person name="Sugiura K."/>
            <person name="Sultana R."/>
            <person name="Takenaka Y."/>
            <person name="Taki K."/>
            <person name="Tammoja K."/>
            <person name="Tan S.L."/>
            <person name="Tang S."/>
            <person name="Taylor M.S."/>
            <person name="Tegner J."/>
            <person name="Teichmann S.A."/>
            <person name="Ueda H.R."/>
            <person name="van Nimwegen E."/>
            <person name="Verardo R."/>
            <person name="Wei C.L."/>
            <person name="Yagi K."/>
            <person name="Yamanishi H."/>
            <person name="Zabarovsky E."/>
            <person name="Zhu S."/>
            <person name="Zimmer A."/>
            <person name="Hide W."/>
            <person name="Bult C."/>
            <person name="Grimmond S.M."/>
            <person name="Teasdale R.D."/>
            <person name="Liu E.T."/>
            <person name="Brusic V."/>
            <person name="Quackenbush J."/>
            <person name="Wahlestedt C."/>
            <person name="Mattick J.S."/>
            <person name="Hume D.A."/>
            <person name="Kai C."/>
            <person name="Sasaki D."/>
            <person name="Tomaru Y."/>
            <person name="Fukuda S."/>
            <person name="Kanamori-Katayama M."/>
            <person name="Suzuki M."/>
            <person name="Aoki J."/>
            <person name="Arakawa T."/>
            <person name="Iida J."/>
            <person name="Imamura K."/>
            <person name="Itoh M."/>
            <person name="Kato T."/>
            <person name="Kawaji H."/>
            <person name="Kawagashira N."/>
            <person name="Kawashima T."/>
            <person name="Kojima M."/>
            <person name="Kondo S."/>
            <person name="Konno H."/>
            <person name="Nakano K."/>
            <person name="Ninomiya N."/>
            <person name="Nishio T."/>
            <person name="Okada M."/>
            <person name="Plessy C."/>
            <person name="Shibata K."/>
            <person name="Shiraki T."/>
            <person name="Suzuki S."/>
            <person name="Tagami M."/>
            <person name="Waki K."/>
            <person name="Watahiki A."/>
            <person name="Okamura-Oho Y."/>
            <person name="Suzuki H."/>
            <person name="Kawai J."/>
            <person name="Hayashizaki Y."/>
        </authorList>
    </citation>
    <scope>NUCLEOTIDE SEQUENCE [LARGE SCALE MRNA] (ISOFORMS 2 AND 3)</scope>
    <source>
        <strain>C57BL/6J</strain>
        <tissue>Egg</tissue>
        <tissue>Mammary gland</tissue>
    </source>
</reference>
<reference key="3">
    <citation type="journal article" date="2007" name="Proc. Natl. Acad. Sci. U.S.A.">
        <title>Large-scale phosphorylation analysis of mouse liver.</title>
        <authorList>
            <person name="Villen J."/>
            <person name="Beausoleil S.A."/>
            <person name="Gerber S.A."/>
            <person name="Gygi S.P."/>
        </authorList>
    </citation>
    <scope>IDENTIFICATION BY MASS SPECTROMETRY [LARGE SCALE ANALYSIS]</scope>
    <source>
        <tissue>Liver</tissue>
    </source>
</reference>
<reference key="4">
    <citation type="journal article" date="2010" name="Cell">
        <title>A tissue-specific atlas of mouse protein phosphorylation and expression.</title>
        <authorList>
            <person name="Huttlin E.L."/>
            <person name="Jedrychowski M.P."/>
            <person name="Elias J.E."/>
            <person name="Goswami T."/>
            <person name="Rad R."/>
            <person name="Beausoleil S.A."/>
            <person name="Villen J."/>
            <person name="Haas W."/>
            <person name="Sowa M.E."/>
            <person name="Gygi S.P."/>
        </authorList>
    </citation>
    <scope>PHOSPHORYLATION [LARGE SCALE ANALYSIS] AT SER-244; SER-265; SER-280 AND SER-293</scope>
    <scope>IDENTIFICATION BY MASS SPECTROMETRY [LARGE SCALE ANALYSIS]</scope>
    <source>
        <tissue>Brown adipose tissue</tissue>
        <tissue>Kidney</tissue>
        <tissue>Liver</tissue>
        <tissue>Lung</tissue>
        <tissue>Pancreas</tissue>
        <tissue>Spleen</tissue>
    </source>
</reference>
<reference key="5">
    <citation type="journal article" date="2018" name="Sci. Transl. Med.">
        <title>The PTH/PTHrP-SIK3 pathway affects skeletogenesis through altered mTOR signaling.</title>
        <authorList>
            <person name="Csukasi F."/>
            <person name="Duran I."/>
            <person name="Barad M."/>
            <person name="Barta T."/>
            <person name="Gudernova I."/>
            <person name="Trantirek L."/>
            <person name="Martin J.H."/>
            <person name="Kuo C.Y."/>
            <person name="Woods J."/>
            <person name="Lee H."/>
            <person name="Cohn D.H."/>
            <person name="Krejci P."/>
            <person name="Krakow D."/>
        </authorList>
    </citation>
    <scope>DEVELOPMENTAL STAGE</scope>
</reference>
<protein>
    <recommendedName>
        <fullName>DEP domain-containing mTOR-interacting protein</fullName>
    </recommendedName>
    <alternativeName>
        <fullName>DEP domain-containing protein 6</fullName>
    </alternativeName>
</protein>
<dbReference type="EMBL" id="AK220300">
    <property type="protein sequence ID" value="BAD90225.1"/>
    <property type="status" value="ALT_INIT"/>
    <property type="molecule type" value="mRNA"/>
</dbReference>
<dbReference type="EMBL" id="AK139888">
    <property type="protein sequence ID" value="BAE24172.1"/>
    <property type="molecule type" value="mRNA"/>
</dbReference>
<dbReference type="EMBL" id="AK145208">
    <property type="protein sequence ID" value="BAE26298.1"/>
    <property type="molecule type" value="mRNA"/>
</dbReference>
<dbReference type="CCDS" id="CCDS27474.1">
    <molecule id="Q570Y9-1"/>
</dbReference>
<dbReference type="CCDS" id="CCDS27475.1">
    <molecule id="Q570Y9-2"/>
</dbReference>
<dbReference type="RefSeq" id="NP_001033026.1">
    <molecule id="Q570Y9-2"/>
    <property type="nucleotide sequence ID" value="NM_001037937.4"/>
</dbReference>
<dbReference type="RefSeq" id="NP_663445.2">
    <molecule id="Q570Y9-1"/>
    <property type="nucleotide sequence ID" value="NM_145470.4"/>
</dbReference>
<dbReference type="SMR" id="Q570Y9"/>
<dbReference type="BioGRID" id="220946">
    <property type="interactions" value="1"/>
</dbReference>
<dbReference type="FunCoup" id="Q570Y9">
    <property type="interactions" value="337"/>
</dbReference>
<dbReference type="STRING" id="10090.ENSMUSP00000094167"/>
<dbReference type="GlyGen" id="Q570Y9">
    <property type="glycosylation" value="1 site, 1 N-linked glycan (1 site)"/>
</dbReference>
<dbReference type="iPTMnet" id="Q570Y9"/>
<dbReference type="PhosphoSitePlus" id="Q570Y9"/>
<dbReference type="SwissPalm" id="Q570Y9"/>
<dbReference type="jPOST" id="Q570Y9"/>
<dbReference type="PaxDb" id="10090-ENSMUSP00000094167"/>
<dbReference type="ProteomicsDB" id="277606">
    <molecule id="Q570Y9-1"/>
</dbReference>
<dbReference type="ProteomicsDB" id="277607">
    <molecule id="Q570Y9-2"/>
</dbReference>
<dbReference type="ProteomicsDB" id="277608">
    <molecule id="Q570Y9-3"/>
</dbReference>
<dbReference type="Pumba" id="Q570Y9"/>
<dbReference type="Antibodypedia" id="13704">
    <property type="antibodies" value="269 antibodies from 32 providers"/>
</dbReference>
<dbReference type="DNASU" id="97998"/>
<dbReference type="Ensembl" id="ENSMUST00000023056.8">
    <molecule id="Q570Y9-2"/>
    <property type="protein sequence ID" value="ENSMUSP00000023056.8"/>
    <property type="gene ID" value="ENSMUSG00000022419.17"/>
</dbReference>
<dbReference type="Ensembl" id="ENSMUST00000096433.10">
    <molecule id="Q570Y9-1"/>
    <property type="protein sequence ID" value="ENSMUSP00000094167.4"/>
    <property type="gene ID" value="ENSMUSG00000022419.17"/>
</dbReference>
<dbReference type="GeneID" id="97998"/>
<dbReference type="KEGG" id="mmu:97998"/>
<dbReference type="UCSC" id="uc007vsb.2">
    <molecule id="Q570Y9-1"/>
    <property type="organism name" value="mouse"/>
</dbReference>
<dbReference type="AGR" id="MGI:2146322"/>
<dbReference type="CTD" id="64798"/>
<dbReference type="MGI" id="MGI:2146322">
    <property type="gene designation" value="Deptor"/>
</dbReference>
<dbReference type="VEuPathDB" id="HostDB:ENSMUSG00000022419"/>
<dbReference type="eggNOG" id="ENOG502QS4Y">
    <property type="taxonomic scope" value="Eukaryota"/>
</dbReference>
<dbReference type="GeneTree" id="ENSGT00520000055667"/>
<dbReference type="HOGENOM" id="CLU_042535_0_0_1"/>
<dbReference type="InParanoid" id="Q570Y9"/>
<dbReference type="OMA" id="HMAEILV"/>
<dbReference type="OrthoDB" id="39497at2759"/>
<dbReference type="PhylomeDB" id="Q570Y9"/>
<dbReference type="BioGRID-ORCS" id="97998">
    <property type="hits" value="1 hit in 76 CRISPR screens"/>
</dbReference>
<dbReference type="ChiTaRS" id="Deptor">
    <property type="organism name" value="mouse"/>
</dbReference>
<dbReference type="PRO" id="PR:Q570Y9"/>
<dbReference type="Proteomes" id="UP000000589">
    <property type="component" value="Chromosome 15"/>
</dbReference>
<dbReference type="RNAct" id="Q570Y9">
    <property type="molecule type" value="protein"/>
</dbReference>
<dbReference type="Bgee" id="ENSMUSG00000022419">
    <property type="expression patterns" value="Expressed in lacrimal gland and 224 other cell types or tissues"/>
</dbReference>
<dbReference type="ExpressionAtlas" id="Q570Y9">
    <property type="expression patterns" value="baseline and differential"/>
</dbReference>
<dbReference type="GO" id="GO:0005765">
    <property type="term" value="C:lysosomal membrane"/>
    <property type="evidence" value="ECO:0000250"/>
    <property type="project" value="UniProtKB"/>
</dbReference>
<dbReference type="GO" id="GO:0070300">
    <property type="term" value="F:phosphatidic acid binding"/>
    <property type="evidence" value="ECO:0000250"/>
    <property type="project" value="UniProtKB"/>
</dbReference>
<dbReference type="GO" id="GO:0004860">
    <property type="term" value="F:protein kinase inhibitor activity"/>
    <property type="evidence" value="ECO:0000250"/>
    <property type="project" value="UniProtKB"/>
</dbReference>
<dbReference type="GO" id="GO:0030291">
    <property type="term" value="F:protein serine/threonine kinase inhibitor activity"/>
    <property type="evidence" value="ECO:0007669"/>
    <property type="project" value="Ensembl"/>
</dbReference>
<dbReference type="GO" id="GO:0035556">
    <property type="term" value="P:intracellular signal transduction"/>
    <property type="evidence" value="ECO:0007669"/>
    <property type="project" value="InterPro"/>
</dbReference>
<dbReference type="GO" id="GO:0045792">
    <property type="term" value="P:negative regulation of cell size"/>
    <property type="evidence" value="ECO:0007669"/>
    <property type="project" value="Ensembl"/>
</dbReference>
<dbReference type="GO" id="GO:1904262">
    <property type="term" value="P:negative regulation of TORC1 signaling"/>
    <property type="evidence" value="ECO:0000250"/>
    <property type="project" value="UniProtKB"/>
</dbReference>
<dbReference type="GO" id="GO:1903940">
    <property type="term" value="P:negative regulation of TORC2 signaling"/>
    <property type="evidence" value="ECO:0000250"/>
    <property type="project" value="UniProtKB"/>
</dbReference>
<dbReference type="GO" id="GO:0010508">
    <property type="term" value="P:positive regulation of autophagy"/>
    <property type="evidence" value="ECO:0007669"/>
    <property type="project" value="Ensembl"/>
</dbReference>
<dbReference type="GO" id="GO:2001236">
    <property type="term" value="P:regulation of extrinsic apoptotic signaling pathway"/>
    <property type="evidence" value="ECO:0007669"/>
    <property type="project" value="Ensembl"/>
</dbReference>
<dbReference type="CDD" id="cd04442">
    <property type="entry name" value="DEP_1_DEP6"/>
    <property type="match status" value="1"/>
</dbReference>
<dbReference type="CDD" id="cd04441">
    <property type="entry name" value="DEP_2_DEP6"/>
    <property type="match status" value="1"/>
</dbReference>
<dbReference type="CDD" id="cd23067">
    <property type="entry name" value="PDZ_DEPTOR-like"/>
    <property type="match status" value="1"/>
</dbReference>
<dbReference type="FunFam" id="1.10.10.10:FF:000308">
    <property type="entry name" value="DEP domain-containing mTOR-interacting protein isoform X1"/>
    <property type="match status" value="1"/>
</dbReference>
<dbReference type="FunFam" id="1.10.10.10:FF:000332">
    <property type="entry name" value="DEP domain-containing mTOR-interacting protein isoform X1"/>
    <property type="match status" value="1"/>
</dbReference>
<dbReference type="FunFam" id="2.30.42.10:FF:000124">
    <property type="entry name" value="DEP domain-containing mTOR-interacting protein isoform X1"/>
    <property type="match status" value="1"/>
</dbReference>
<dbReference type="Gene3D" id="2.30.42.10">
    <property type="match status" value="1"/>
</dbReference>
<dbReference type="Gene3D" id="1.10.10.10">
    <property type="entry name" value="Winged helix-like DNA-binding domain superfamily/Winged helix DNA-binding domain"/>
    <property type="match status" value="2"/>
</dbReference>
<dbReference type="InterPro" id="IPR000591">
    <property type="entry name" value="DEP_dom"/>
</dbReference>
<dbReference type="InterPro" id="IPR037335">
    <property type="entry name" value="DEPTOR_DEP_1"/>
</dbReference>
<dbReference type="InterPro" id="IPR037336">
    <property type="entry name" value="DEPTOR_DEP_2"/>
</dbReference>
<dbReference type="InterPro" id="IPR051832">
    <property type="entry name" value="mTOR-Rac_regulators"/>
</dbReference>
<dbReference type="InterPro" id="IPR001478">
    <property type="entry name" value="PDZ"/>
</dbReference>
<dbReference type="InterPro" id="IPR036034">
    <property type="entry name" value="PDZ_sf"/>
</dbReference>
<dbReference type="InterPro" id="IPR036388">
    <property type="entry name" value="WH-like_DNA-bd_sf"/>
</dbReference>
<dbReference type="InterPro" id="IPR036390">
    <property type="entry name" value="WH_DNA-bd_sf"/>
</dbReference>
<dbReference type="PANTHER" id="PTHR22829">
    <property type="entry name" value="DEP DOMAIN PROTEIN"/>
    <property type="match status" value="1"/>
</dbReference>
<dbReference type="PANTHER" id="PTHR22829:SF18">
    <property type="entry name" value="DEP DOMAIN-CONTAINING MTOR-INTERACTING PROTEIN"/>
    <property type="match status" value="1"/>
</dbReference>
<dbReference type="Pfam" id="PF00610">
    <property type="entry name" value="DEP"/>
    <property type="match status" value="2"/>
</dbReference>
<dbReference type="SMART" id="SM00049">
    <property type="entry name" value="DEP"/>
    <property type="match status" value="2"/>
</dbReference>
<dbReference type="SMART" id="SM00228">
    <property type="entry name" value="PDZ"/>
    <property type="match status" value="1"/>
</dbReference>
<dbReference type="SUPFAM" id="SSF50156">
    <property type="entry name" value="PDZ domain-like"/>
    <property type="match status" value="1"/>
</dbReference>
<dbReference type="SUPFAM" id="SSF46785">
    <property type="entry name" value="Winged helix' DNA-binding domain"/>
    <property type="match status" value="2"/>
</dbReference>
<dbReference type="PROSITE" id="PS50186">
    <property type="entry name" value="DEP"/>
    <property type="match status" value="2"/>
</dbReference>
<dbReference type="PROSITE" id="PS50106">
    <property type="entry name" value="PDZ"/>
    <property type="match status" value="1"/>
</dbReference>